<sequence length="648" mass="71997">MTIPFSPNPEQINVSSVPATQAEVQVEYTLRTKSDAIEHTSQSNRLKDLAKDPWLRTTGNRHASSGTEIPSSEQTKSARILVVGAGYGGLLFAVRLLQSGFSLGDILLVDAAGGFGGTWYWNRYPGLMCDIESYIYMPLLEETGHIPSRKYVPGEELRGHAERIAEKWKLHTQTLFRTTISCLTWDENKTQWIATASQSNSESQESNSFVISADFAILANGTLSKPKIPDLPGVDDFAGHVFHTARWDYDYTGGSPSIPVMDRLKTKRVGVIGTGSTAVQVIPQLARWAGELTVFQRTPVAVGLQENQETDRIWWSEEIDKVGPGWQRKRCENFNAFITDTRQEKLEEVMKEDKVQDGWTRFPSFSAAIGGAHNLQPDFLQLVVKVDEERQKTARQHIKSTVHDPATAEALLNSTYSWCKRPCFHQGYYETYNLPHVKLVNTAGEGVTELTRGGVLLDGKEYELDLIVLATGYDIGSLCPADRAQISVRGRKGHLMNQKWAAGPATFHGVMTRDFPNLFFPGTSQAGVTANQSYMFDRAAEHVSYIIRQAYNHVAAGFANPKVCVEPSQEAEDWWTMETVARAKAFAATKICSSGSYTISARSGGSGNVEKTARHMPWGEGMASYVKILEEWRKKGHMDGLEIAWKGT</sequence>
<comment type="function">
    <text evidence="2 3 4 5 6">FAD-binding monooxygenase; part of the gene cluster that mediates the biosynthesis of terretonin, a fungal meroterpenoid that acts as a mycotoxin (PubMed:22549923, PubMed:23116177, PubMed:25671343). The first step of the pathway is the synthesis of 3,5-dimethylorsellinic acid (DMOA) by the polyketide synthase trt4 (PubMed:22549923, PubMed:23116177). DMOA is then prenylated into farnesyl-DMOA by the polyprenyl transferase trt2 (PubMed:22549923, PubMed:22782788, PubMed:23116177). Methylation by the methyltransferase trt5 then leads to farnesyl-DMOA methyl ester which is further subject to epoxidation by the FAD-dependent monooxygenase trt8 to yield epoxyfarnesyl-DMOA methyl ester (PubMed:22549923, PubMed:22782788, PubMed:23116177). Cyclization of epoxyfarnesyl-DMOA methyl ester by the terpene cyclase trt1 leads to a tetracycle intermediate which is in turn converted to preterretonin (PubMed:22549923, PubMed:22782788, PubMed:23116177). Dehydrogenase trt9 comes next to transform preterretonin to preterrenoid (PubMed:22549923, PubMed:23116177). The FAD-dependent monooxygenase trt3 is then required for the C-hydroxylation at C16 of preterrenoid to yield terrenoid (PubMed:22549923, PubMed:23116177). The cytochrome P450 trt6 catalyzes three successive oxidations to transform terrenoid into an unstable intermediate, which then undergoes the D-ring expansion and unusual rearrangement of the methoxy group to afford the core skeleton of terretonin (PubMed:25671343, PubMed:28759016). Trt14 catalyzes the D-ring expansion of terretonin involving intramolecular methoxy rearrangement as well as the hydrolysis of the expanded D-ring and the methyl ester moiety (PubMed:25671343, PubMed:28759016). Finally, the nonheme iron-dependent dioxygenase trt7 accomplishes the last two oxidation reactions steps to complete the biosynthesis of terretonin (PubMed:25671343). Terretonin C is produced via spontaneous decarboxylation of the terretonin precursor (PubMed:23116177). Another shunt product of the terretonin biosynthesis is dihydrofarnesyl-DMOA, derived from epoxyfarnesyl-DMOA through hydrolysis of the epoxide (PubMed:22549923, PubMed:22782788, PubMed:23116177).</text>
</comment>
<comment type="cofactor">
    <cofactor evidence="1">
        <name>FAD</name>
        <dbReference type="ChEBI" id="CHEBI:57692"/>
    </cofactor>
    <text evidence="1">Binds 1 FAD per subunit.</text>
</comment>
<comment type="pathway">
    <text evidence="4">Secondary metabolite biosynthesis; terpenoid biosynthesis.</text>
</comment>
<comment type="disruption phenotype">
    <text evidence="4">Impairs the synthesis of terretonin but accumulates preterrenoid (PubMed:23116177).</text>
</comment>
<comment type="similarity">
    <text evidence="8">Belongs to the FAD-binding monooxygenase family.</text>
</comment>
<accession>Q0C8A5</accession>
<gene>
    <name evidence="7" type="primary">trt3</name>
    <name type="ORF">ATEG_10079</name>
</gene>
<reference key="1">
    <citation type="submission" date="2005-09" db="EMBL/GenBank/DDBJ databases">
        <title>Annotation of the Aspergillus terreus NIH2624 genome.</title>
        <authorList>
            <person name="Birren B.W."/>
            <person name="Lander E.S."/>
            <person name="Galagan J.E."/>
            <person name="Nusbaum C."/>
            <person name="Devon K."/>
            <person name="Henn M."/>
            <person name="Ma L.-J."/>
            <person name="Jaffe D.B."/>
            <person name="Butler J."/>
            <person name="Alvarez P."/>
            <person name="Gnerre S."/>
            <person name="Grabherr M."/>
            <person name="Kleber M."/>
            <person name="Mauceli E.W."/>
            <person name="Brockman W."/>
            <person name="Rounsley S."/>
            <person name="Young S.K."/>
            <person name="LaButti K."/>
            <person name="Pushparaj V."/>
            <person name="DeCaprio D."/>
            <person name="Crawford M."/>
            <person name="Koehrsen M."/>
            <person name="Engels R."/>
            <person name="Montgomery P."/>
            <person name="Pearson M."/>
            <person name="Howarth C."/>
            <person name="Larson L."/>
            <person name="Luoma S."/>
            <person name="White J."/>
            <person name="Alvarado L."/>
            <person name="Kodira C.D."/>
            <person name="Zeng Q."/>
            <person name="Oleary S."/>
            <person name="Yandava C."/>
            <person name="Denning D.W."/>
            <person name="Nierman W.C."/>
            <person name="Milne T."/>
            <person name="Madden K."/>
        </authorList>
    </citation>
    <scope>NUCLEOTIDE SEQUENCE [LARGE SCALE GENOMIC DNA]</scope>
    <source>
        <strain>NIH 2624 / FGSC A1156</strain>
    </source>
</reference>
<reference key="2">
    <citation type="journal article" date="2012" name="ChemBioChem">
        <title>Identification of a key prenyltransferase involved in biosynthesis of the most abundant fungal meroterpenoids derived from 3,5-dimethylorsellinic acid.</title>
        <authorList>
            <person name="Itoh T."/>
            <person name="Tokunaga K."/>
            <person name="Radhakrishnan E.K."/>
            <person name="Fujii I."/>
            <person name="Abe I."/>
            <person name="Ebizuka Y."/>
            <person name="Kushiro T."/>
        </authorList>
    </citation>
    <scope>FUNCTION</scope>
</reference>
<reference key="3">
    <citation type="journal article" date="2012" name="ChemBioChem">
        <title>Terretonin biosynthesis requires methylation as essential step for cyclization.</title>
        <authorList>
            <person name="Matsuda Y."/>
            <person name="Awakawa T."/>
            <person name="Itoh T."/>
            <person name="Wakimoto T."/>
            <person name="Kushiro T."/>
            <person name="Fujii I."/>
            <person name="Ebizuka Y."/>
            <person name="Abe I."/>
        </authorList>
    </citation>
    <scope>FUNCTION</scope>
</reference>
<reference key="4">
    <citation type="journal article" date="2012" name="Org. Lett.">
        <title>Molecular genetic characterization of a cluster in A. terreus for biosynthesis of the meroterpenoid terretonin.</title>
        <authorList>
            <person name="Guo C.J."/>
            <person name="Knox B.P."/>
            <person name="Chiang Y.M."/>
            <person name="Lo H.C."/>
            <person name="Sanchez J.F."/>
            <person name="Lee K.H."/>
            <person name="Oakley B.R."/>
            <person name="Bruno K.S."/>
            <person name="Wang C.C."/>
        </authorList>
    </citation>
    <scope>FUNCTION</scope>
    <scope>CATALYTIC ACTIVITY</scope>
    <scope>DISRUPTION PHENOTYPE</scope>
</reference>
<reference key="5">
    <citation type="journal article" date="2015" name="J. Am. Chem. Soc.">
        <title>Uncovering the unusual D-ring construction in terretonin biosynthesis by collaboration of a multifunctional cytochrome P450 and a unique isomerase.</title>
        <authorList>
            <person name="Matsuda Y."/>
            <person name="Iwabuchi T."/>
            <person name="Wakimoto T."/>
            <person name="Awakawa T."/>
            <person name="Abe I."/>
        </authorList>
    </citation>
    <scope>FUNCTION</scope>
</reference>
<reference key="6">
    <citation type="journal article" date="2017" name="Nat. Chem. Biol.">
        <title>Molecular basis for the unusual ring reconstruction in fungal meroterpenoid biogenesis.</title>
        <authorList>
            <person name="Mori T."/>
            <person name="Iwabuchi T."/>
            <person name="Hoshino S."/>
            <person name="Wang H."/>
            <person name="Matsuda Y."/>
            <person name="Abe I."/>
        </authorList>
    </citation>
    <scope>FUNCTION</scope>
</reference>
<name>TRT3_ASPTN</name>
<feature type="chain" id="PRO_0000436592" description="FAD-binding monooxygenase trt3">
    <location>
        <begin position="1"/>
        <end position="648"/>
    </location>
</feature>
<feature type="binding site" evidence="1">
    <location>
        <begin position="118"/>
        <end position="121"/>
    </location>
    <ligand>
        <name>FAD</name>
        <dbReference type="ChEBI" id="CHEBI:57692"/>
    </ligand>
</feature>
<feature type="binding site" evidence="1">
    <location>
        <begin position="128"/>
        <end position="130"/>
    </location>
    <ligand>
        <name>NADP(+)</name>
        <dbReference type="ChEBI" id="CHEBI:58349"/>
    </ligand>
</feature>
<feature type="binding site" evidence="1">
    <location>
        <begin position="130"/>
        <end position="131"/>
    </location>
    <ligand>
        <name>FAD</name>
        <dbReference type="ChEBI" id="CHEBI:57692"/>
    </ligand>
</feature>
<feature type="binding site" evidence="1">
    <location>
        <position position="136"/>
    </location>
    <ligand>
        <name>FAD</name>
        <dbReference type="ChEBI" id="CHEBI:57692"/>
    </ligand>
</feature>
<feature type="binding site" evidence="1">
    <location>
        <begin position="274"/>
        <end position="280"/>
    </location>
    <ligand>
        <name>NADP(+)</name>
        <dbReference type="ChEBI" id="CHEBI:58349"/>
    </ligand>
</feature>
<feature type="binding site" evidence="1">
    <location>
        <begin position="297"/>
        <end position="298"/>
    </location>
    <ligand>
        <name>NADP(+)</name>
        <dbReference type="ChEBI" id="CHEBI:58349"/>
    </ligand>
</feature>
<feature type="site" description="Transition state stabilizer" evidence="1">
    <location>
        <position position="421"/>
    </location>
</feature>
<evidence type="ECO:0000250" key="1">
    <source>
        <dbReference type="UniProtKB" id="H3JQW0"/>
    </source>
</evidence>
<evidence type="ECO:0000269" key="2">
    <source>
    </source>
</evidence>
<evidence type="ECO:0000269" key="3">
    <source>
    </source>
</evidence>
<evidence type="ECO:0000269" key="4">
    <source>
    </source>
</evidence>
<evidence type="ECO:0000269" key="5">
    <source>
    </source>
</evidence>
<evidence type="ECO:0000269" key="6">
    <source>
    </source>
</evidence>
<evidence type="ECO:0000303" key="7">
    <source>
    </source>
</evidence>
<evidence type="ECO:0000305" key="8"/>
<evidence type="ECO:0000305" key="9">
    <source>
    </source>
</evidence>
<protein>
    <recommendedName>
        <fullName evidence="7">FAD-binding monooxygenase trt3</fullName>
        <ecNumber evidence="9">1.14.13.-</ecNumber>
    </recommendedName>
    <alternativeName>
        <fullName evidence="7">Terretonin synthesis protein 3</fullName>
    </alternativeName>
</protein>
<organism>
    <name type="scientific">Aspergillus terreus (strain NIH 2624 / FGSC A1156)</name>
    <dbReference type="NCBI Taxonomy" id="341663"/>
    <lineage>
        <taxon>Eukaryota</taxon>
        <taxon>Fungi</taxon>
        <taxon>Dikarya</taxon>
        <taxon>Ascomycota</taxon>
        <taxon>Pezizomycotina</taxon>
        <taxon>Eurotiomycetes</taxon>
        <taxon>Eurotiomycetidae</taxon>
        <taxon>Eurotiales</taxon>
        <taxon>Aspergillaceae</taxon>
        <taxon>Aspergillus</taxon>
        <taxon>Aspergillus subgen. Circumdati</taxon>
    </lineage>
</organism>
<proteinExistence type="evidence at protein level"/>
<keyword id="KW-0274">FAD</keyword>
<keyword id="KW-0285">Flavoprotein</keyword>
<keyword id="KW-0521">NADP</keyword>
<keyword id="KW-0560">Oxidoreductase</keyword>
<keyword id="KW-1185">Reference proteome</keyword>
<dbReference type="EC" id="1.14.13.-" evidence="9"/>
<dbReference type="EMBL" id="CH476609">
    <property type="protein sequence ID" value="EAU29528.1"/>
    <property type="molecule type" value="Genomic_DNA"/>
</dbReference>
<dbReference type="RefSeq" id="XP_001209381.1">
    <property type="nucleotide sequence ID" value="XM_001209381.1"/>
</dbReference>
<dbReference type="SMR" id="Q0C8A5"/>
<dbReference type="STRING" id="341663.Q0C8A5"/>
<dbReference type="EnsemblFungi" id="EAU29528">
    <property type="protein sequence ID" value="EAU29528"/>
    <property type="gene ID" value="ATEG_10079"/>
</dbReference>
<dbReference type="GeneID" id="4319422"/>
<dbReference type="VEuPathDB" id="FungiDB:ATEG_10079"/>
<dbReference type="eggNOG" id="ENOG502SHCE">
    <property type="taxonomic scope" value="Eukaryota"/>
</dbReference>
<dbReference type="HOGENOM" id="CLU_006937_8_2_1"/>
<dbReference type="OMA" id="TANQSYM"/>
<dbReference type="OrthoDB" id="66881at2759"/>
<dbReference type="UniPathway" id="UPA00213"/>
<dbReference type="Proteomes" id="UP000007963">
    <property type="component" value="Unassembled WGS sequence"/>
</dbReference>
<dbReference type="GO" id="GO:0016491">
    <property type="term" value="F:oxidoreductase activity"/>
    <property type="evidence" value="ECO:0007669"/>
    <property type="project" value="UniProtKB-KW"/>
</dbReference>
<dbReference type="GO" id="GO:0016114">
    <property type="term" value="P:terpenoid biosynthetic process"/>
    <property type="evidence" value="ECO:0007669"/>
    <property type="project" value="UniProtKB-UniPathway"/>
</dbReference>
<dbReference type="Gene3D" id="3.50.50.60">
    <property type="entry name" value="FAD/NAD(P)-binding domain"/>
    <property type="match status" value="3"/>
</dbReference>
<dbReference type="InterPro" id="IPR050775">
    <property type="entry name" value="FAD-binding_Monooxygenases"/>
</dbReference>
<dbReference type="InterPro" id="IPR036188">
    <property type="entry name" value="FAD/NAD-bd_sf"/>
</dbReference>
<dbReference type="InterPro" id="IPR023753">
    <property type="entry name" value="FAD/NAD-binding_dom"/>
</dbReference>
<dbReference type="PANTHER" id="PTHR43098:SF2">
    <property type="entry name" value="FAD-BINDING MONOOXYGENASE AUSB-RELATED"/>
    <property type="match status" value="1"/>
</dbReference>
<dbReference type="PANTHER" id="PTHR43098">
    <property type="entry name" value="L-ORNITHINE N(5)-MONOOXYGENASE-RELATED"/>
    <property type="match status" value="1"/>
</dbReference>
<dbReference type="Pfam" id="PF07992">
    <property type="entry name" value="Pyr_redox_2"/>
    <property type="match status" value="1"/>
</dbReference>
<dbReference type="PRINTS" id="PR00411">
    <property type="entry name" value="PNDRDTASEI"/>
</dbReference>
<dbReference type="SUPFAM" id="SSF51905">
    <property type="entry name" value="FAD/NAD(P)-binding domain"/>
    <property type="match status" value="1"/>
</dbReference>